<keyword id="KW-0067">ATP-binding</keyword>
<keyword id="KW-0436">Ligase</keyword>
<keyword id="KW-0460">Magnesium</keyword>
<keyword id="KW-0464">Manganese</keyword>
<keyword id="KW-0479">Metal-binding</keyword>
<keyword id="KW-0547">Nucleotide-binding</keyword>
<keyword id="KW-0648">Protein biosynthesis</keyword>
<dbReference type="EC" id="6.3.2.-" evidence="1"/>
<dbReference type="EMBL" id="CP000802">
    <property type="protein sequence ID" value="ABV05309.1"/>
    <property type="molecule type" value="Genomic_DNA"/>
</dbReference>
<dbReference type="RefSeq" id="WP_000684321.1">
    <property type="nucleotide sequence ID" value="NC_009800.1"/>
</dbReference>
<dbReference type="SMR" id="A7ZYF5"/>
<dbReference type="GeneID" id="93776570"/>
<dbReference type="KEGG" id="ecx:EcHS_A0955"/>
<dbReference type="HOGENOM" id="CLU_054353_0_1_6"/>
<dbReference type="GO" id="GO:0005737">
    <property type="term" value="C:cytoplasm"/>
    <property type="evidence" value="ECO:0007669"/>
    <property type="project" value="TreeGrafter"/>
</dbReference>
<dbReference type="GO" id="GO:0005524">
    <property type="term" value="F:ATP binding"/>
    <property type="evidence" value="ECO:0007669"/>
    <property type="project" value="UniProtKB-UniRule"/>
</dbReference>
<dbReference type="GO" id="GO:0046872">
    <property type="term" value="F:metal ion binding"/>
    <property type="evidence" value="ECO:0007669"/>
    <property type="project" value="UniProtKB-KW"/>
</dbReference>
<dbReference type="GO" id="GO:0018169">
    <property type="term" value="F:ribosomal S6-glutamic acid ligase activity"/>
    <property type="evidence" value="ECO:0007669"/>
    <property type="project" value="UniProtKB-UniRule"/>
</dbReference>
<dbReference type="GO" id="GO:0036211">
    <property type="term" value="P:protein modification process"/>
    <property type="evidence" value="ECO:0007669"/>
    <property type="project" value="InterPro"/>
</dbReference>
<dbReference type="GO" id="GO:0009432">
    <property type="term" value="P:SOS response"/>
    <property type="evidence" value="ECO:0007669"/>
    <property type="project" value="TreeGrafter"/>
</dbReference>
<dbReference type="GO" id="GO:0006412">
    <property type="term" value="P:translation"/>
    <property type="evidence" value="ECO:0007669"/>
    <property type="project" value="UniProtKB-KW"/>
</dbReference>
<dbReference type="FunFam" id="3.40.50.20:FF:000004">
    <property type="entry name" value="Probable alpha-L-glutamate ligase"/>
    <property type="match status" value="1"/>
</dbReference>
<dbReference type="FunFam" id="3.30.1490.20:FF:000005">
    <property type="entry name" value="Probable alpha-L-glutamate ligase 1"/>
    <property type="match status" value="1"/>
</dbReference>
<dbReference type="FunFam" id="3.30.470.20:FF:000016">
    <property type="entry name" value="Ribosomal protein S6--L-glutamate ligase"/>
    <property type="match status" value="1"/>
</dbReference>
<dbReference type="Gene3D" id="3.40.50.20">
    <property type="match status" value="1"/>
</dbReference>
<dbReference type="Gene3D" id="3.30.1490.20">
    <property type="entry name" value="ATP-grasp fold, A domain"/>
    <property type="match status" value="1"/>
</dbReference>
<dbReference type="Gene3D" id="3.30.470.20">
    <property type="entry name" value="ATP-grasp fold, B domain"/>
    <property type="match status" value="1"/>
</dbReference>
<dbReference type="HAMAP" id="MF_01552">
    <property type="entry name" value="RimK"/>
    <property type="match status" value="1"/>
</dbReference>
<dbReference type="InterPro" id="IPR011761">
    <property type="entry name" value="ATP-grasp"/>
</dbReference>
<dbReference type="InterPro" id="IPR013651">
    <property type="entry name" value="ATP-grasp_RimK-type"/>
</dbReference>
<dbReference type="InterPro" id="IPR013815">
    <property type="entry name" value="ATP_grasp_subdomain_1"/>
</dbReference>
<dbReference type="InterPro" id="IPR023533">
    <property type="entry name" value="RimK"/>
</dbReference>
<dbReference type="InterPro" id="IPR041107">
    <property type="entry name" value="Rimk_N"/>
</dbReference>
<dbReference type="InterPro" id="IPR004666">
    <property type="entry name" value="Rp_bS6_RimK/Lys_biosynth_LsyX"/>
</dbReference>
<dbReference type="NCBIfam" id="NF007764">
    <property type="entry name" value="PRK10446.1"/>
    <property type="match status" value="1"/>
</dbReference>
<dbReference type="NCBIfam" id="TIGR00768">
    <property type="entry name" value="rimK_fam"/>
    <property type="match status" value="1"/>
</dbReference>
<dbReference type="PANTHER" id="PTHR21621:SF7">
    <property type="entry name" value="RIBOSOMAL PROTEIN BS6--L-GLUTAMATE LIGASE"/>
    <property type="match status" value="1"/>
</dbReference>
<dbReference type="PANTHER" id="PTHR21621">
    <property type="entry name" value="RIBOSOMAL PROTEIN S6 MODIFICATION PROTEIN"/>
    <property type="match status" value="1"/>
</dbReference>
<dbReference type="Pfam" id="PF08443">
    <property type="entry name" value="RimK"/>
    <property type="match status" value="1"/>
</dbReference>
<dbReference type="Pfam" id="PF18030">
    <property type="entry name" value="Rimk_N"/>
    <property type="match status" value="1"/>
</dbReference>
<dbReference type="SUPFAM" id="SSF56059">
    <property type="entry name" value="Glutathione synthetase ATP-binding domain-like"/>
    <property type="match status" value="1"/>
</dbReference>
<dbReference type="PROSITE" id="PS50975">
    <property type="entry name" value="ATP_GRASP"/>
    <property type="match status" value="1"/>
</dbReference>
<comment type="function">
    <text evidence="1">An L-glutamate ligase that catalyzes the ATP-dependent post-translational addition of glutamate residues to the C-terminus of ribosomal protein bS6 (RpsF). Is also able to catalyze the synthesis of poly-alpha-glutamate in vitro, via ATP hydrolysis from unprotected glutamate as substrate. The number of glutamate residues added to either RpsF or to poly-alpha-glutamate changes with pH.</text>
</comment>
<comment type="cofactor">
    <cofactor evidence="1">
        <name>Mg(2+)</name>
        <dbReference type="ChEBI" id="CHEBI:18420"/>
    </cofactor>
    <cofactor evidence="1">
        <name>Mn(2+)</name>
        <dbReference type="ChEBI" id="CHEBI:29035"/>
    </cofactor>
    <text evidence="1">Binds 2 magnesium or manganese ions per subunit.</text>
</comment>
<comment type="similarity">
    <text evidence="1">Belongs to the RimK family.</text>
</comment>
<feature type="chain" id="PRO_1000068835" description="Ribosomal protein bS6--L-glutamate ligase">
    <location>
        <begin position="1"/>
        <end position="300"/>
    </location>
</feature>
<feature type="domain" description="ATP-grasp" evidence="1">
    <location>
        <begin position="104"/>
        <end position="287"/>
    </location>
</feature>
<feature type="binding site" evidence="1">
    <location>
        <position position="141"/>
    </location>
    <ligand>
        <name>ATP</name>
        <dbReference type="ChEBI" id="CHEBI:30616"/>
    </ligand>
</feature>
<feature type="binding site" evidence="1">
    <location>
        <begin position="178"/>
        <end position="179"/>
    </location>
    <ligand>
        <name>ATP</name>
        <dbReference type="ChEBI" id="CHEBI:30616"/>
    </ligand>
</feature>
<feature type="binding site" evidence="1">
    <location>
        <position position="187"/>
    </location>
    <ligand>
        <name>ATP</name>
        <dbReference type="ChEBI" id="CHEBI:30616"/>
    </ligand>
</feature>
<feature type="binding site" evidence="1">
    <location>
        <begin position="211"/>
        <end position="213"/>
    </location>
    <ligand>
        <name>ATP</name>
        <dbReference type="ChEBI" id="CHEBI:30616"/>
    </ligand>
</feature>
<feature type="binding site" evidence="1">
    <location>
        <position position="248"/>
    </location>
    <ligand>
        <name>Mg(2+)</name>
        <dbReference type="ChEBI" id="CHEBI:18420"/>
        <label>1</label>
    </ligand>
</feature>
<feature type="binding site" evidence="1">
    <location>
        <position position="248"/>
    </location>
    <ligand>
        <name>Mn(2+)</name>
        <dbReference type="ChEBI" id="CHEBI:29035"/>
        <label>1</label>
    </ligand>
</feature>
<feature type="binding site" evidence="1">
    <location>
        <position position="260"/>
    </location>
    <ligand>
        <name>Mg(2+)</name>
        <dbReference type="ChEBI" id="CHEBI:18420"/>
        <label>1</label>
    </ligand>
</feature>
<feature type="binding site" evidence="1">
    <location>
        <position position="260"/>
    </location>
    <ligand>
        <name>Mg(2+)</name>
        <dbReference type="ChEBI" id="CHEBI:18420"/>
        <label>2</label>
    </ligand>
</feature>
<feature type="binding site" evidence="1">
    <location>
        <position position="260"/>
    </location>
    <ligand>
        <name>Mn(2+)</name>
        <dbReference type="ChEBI" id="CHEBI:29035"/>
        <label>1</label>
    </ligand>
</feature>
<feature type="binding site" evidence="1">
    <location>
        <position position="260"/>
    </location>
    <ligand>
        <name>Mn(2+)</name>
        <dbReference type="ChEBI" id="CHEBI:29035"/>
        <label>2</label>
    </ligand>
</feature>
<feature type="binding site" evidence="1">
    <location>
        <position position="262"/>
    </location>
    <ligand>
        <name>Mg(2+)</name>
        <dbReference type="ChEBI" id="CHEBI:18420"/>
        <label>2</label>
    </ligand>
</feature>
<feature type="binding site" evidence="1">
    <location>
        <position position="262"/>
    </location>
    <ligand>
        <name>Mn(2+)</name>
        <dbReference type="ChEBI" id="CHEBI:29035"/>
        <label>2</label>
    </ligand>
</feature>
<name>RIMK_ECOHS</name>
<evidence type="ECO:0000255" key="1">
    <source>
        <dbReference type="HAMAP-Rule" id="MF_01552"/>
    </source>
</evidence>
<protein>
    <recommendedName>
        <fullName evidence="1">Ribosomal protein bS6--L-glutamate ligase</fullName>
        <ecNumber evidence="1">6.3.2.-</ecNumber>
    </recommendedName>
    <alternativeName>
        <fullName evidence="1">Poly-alpha-glutamate synthase</fullName>
    </alternativeName>
    <alternativeName>
        <fullName evidence="1">Ribosomal protein bS6 modification protein</fullName>
    </alternativeName>
</protein>
<reference key="1">
    <citation type="journal article" date="2008" name="J. Bacteriol.">
        <title>The pangenome structure of Escherichia coli: comparative genomic analysis of E. coli commensal and pathogenic isolates.</title>
        <authorList>
            <person name="Rasko D.A."/>
            <person name="Rosovitz M.J."/>
            <person name="Myers G.S.A."/>
            <person name="Mongodin E.F."/>
            <person name="Fricke W.F."/>
            <person name="Gajer P."/>
            <person name="Crabtree J."/>
            <person name="Sebaihia M."/>
            <person name="Thomson N.R."/>
            <person name="Chaudhuri R."/>
            <person name="Henderson I.R."/>
            <person name="Sperandio V."/>
            <person name="Ravel J."/>
        </authorList>
    </citation>
    <scope>NUCLEOTIDE SEQUENCE [LARGE SCALE GENOMIC DNA]</scope>
    <source>
        <strain>HS</strain>
    </source>
</reference>
<sequence>MKIAILSRDGTLYSCKRLREAAIQRGHLVEILDPLSCYMNINPAASSIHYKGRKLPHFDAVIPRIGTAITFYGTAALRQFEMLGSYPLNESVAIARARDKLRSMQLLARQGIDLPVTGIAHSPDDTSDLIDMVGGAPLVVKLVEGTQGIGVVLAETRQAAESVIDAFRGLNAHILVQEYIKEAQGCDIRCLVVGDEVVAAIERRAKEGDFRSNLHRGGAASVASITPQEREIAIKAARTMALDVAGVDILRANRGPLVMEVNASPGLEGIEKTTGIDIAGKMIRWIERHATTEYCLKTGG</sequence>
<proteinExistence type="inferred from homology"/>
<organism>
    <name type="scientific">Escherichia coli O9:H4 (strain HS)</name>
    <dbReference type="NCBI Taxonomy" id="331112"/>
    <lineage>
        <taxon>Bacteria</taxon>
        <taxon>Pseudomonadati</taxon>
        <taxon>Pseudomonadota</taxon>
        <taxon>Gammaproteobacteria</taxon>
        <taxon>Enterobacterales</taxon>
        <taxon>Enterobacteriaceae</taxon>
        <taxon>Escherichia</taxon>
    </lineage>
</organism>
<accession>A7ZYF5</accession>
<gene>
    <name evidence="1" type="primary">rimK</name>
    <name type="ordered locus">EcHS_A0955</name>
</gene>